<comment type="function">
    <text>Binds to actin and affects the structure of the cytoskeleton. At high concentrations, profilin prevents the polymerization of actin, whereas it enhances it at low concentrations. By binding to PIP2, it inhibits the formation of IP3 and DG.</text>
</comment>
<comment type="subunit">
    <text>Occurs in many kinds of cells as a complex with monomeric actin in a 1:1 ratio.</text>
</comment>
<comment type="subcellular location">
    <subcellularLocation>
        <location>Cytoplasm</location>
        <location>Cytoskeleton</location>
    </subcellularLocation>
</comment>
<comment type="similarity">
    <text evidence="2">Belongs to the profilin family.</text>
</comment>
<protein>
    <recommendedName>
        <fullName>Profilin-1</fullName>
    </recommendedName>
</protein>
<gene>
    <name type="primary">PRO1</name>
</gene>
<evidence type="ECO:0000250" key="1"/>
<evidence type="ECO:0000305" key="2"/>
<accession>P52184</accession>
<sequence>MSWQTYVDDHLCCEIDGQHLTSAAILGHDGRVWVQSPNFPQFKPEEIAGIIKDFDEPGHLAPTGLFLGGTKYMVIQGEPGVVIRGKKGTGGITIKKTGMPLILGIYDEPMTPGQCNLVVERLGDYLVEQGF</sequence>
<name>PROF1_HORVU</name>
<feature type="initiator methionine" description="Removed" evidence="1">
    <location>
        <position position="1"/>
    </location>
</feature>
<feature type="chain" id="PRO_0000199639" description="Profilin-1">
    <location>
        <begin position="2"/>
        <end position="131"/>
    </location>
</feature>
<proteinExistence type="evidence at transcript level"/>
<reference key="1">
    <citation type="submission" date="1996-02" db="EMBL/GenBank/DDBJ databases">
        <authorList>
            <person name="Suzuki S."/>
            <person name="Kobayashi I."/>
            <person name="Hattori T."/>
            <person name="Kunoh H."/>
        </authorList>
    </citation>
    <scope>NUCLEOTIDE SEQUENCE [MRNA]</scope>
    <source>
        <strain>cv. Kobinkatagi</strain>
        <tissue>Leaf</tissue>
    </source>
</reference>
<organism>
    <name type="scientific">Hordeum vulgare</name>
    <name type="common">Barley</name>
    <dbReference type="NCBI Taxonomy" id="4513"/>
    <lineage>
        <taxon>Eukaryota</taxon>
        <taxon>Viridiplantae</taxon>
        <taxon>Streptophyta</taxon>
        <taxon>Embryophyta</taxon>
        <taxon>Tracheophyta</taxon>
        <taxon>Spermatophyta</taxon>
        <taxon>Magnoliopsida</taxon>
        <taxon>Liliopsida</taxon>
        <taxon>Poales</taxon>
        <taxon>Poaceae</taxon>
        <taxon>BOP clade</taxon>
        <taxon>Pooideae</taxon>
        <taxon>Triticodae</taxon>
        <taxon>Triticeae</taxon>
        <taxon>Hordeinae</taxon>
        <taxon>Hordeum</taxon>
    </lineage>
</organism>
<dbReference type="EMBL" id="U49505">
    <property type="protein sequence ID" value="AAA92503.1"/>
    <property type="molecule type" value="mRNA"/>
</dbReference>
<dbReference type="PIR" id="T04415">
    <property type="entry name" value="T04415"/>
</dbReference>
<dbReference type="SMR" id="P52184"/>
<dbReference type="Allergome" id="1406">
    <property type="allergen name" value="Hor v 12"/>
</dbReference>
<dbReference type="Allergome" id="3327">
    <property type="allergen name" value="Hor v 12.0101"/>
</dbReference>
<dbReference type="ExpressionAtlas" id="P52184">
    <property type="expression patterns" value="baseline and differential"/>
</dbReference>
<dbReference type="GO" id="GO:0005938">
    <property type="term" value="C:cell cortex"/>
    <property type="evidence" value="ECO:0007669"/>
    <property type="project" value="TreeGrafter"/>
</dbReference>
<dbReference type="GO" id="GO:0005856">
    <property type="term" value="C:cytoskeleton"/>
    <property type="evidence" value="ECO:0007669"/>
    <property type="project" value="UniProtKB-SubCell"/>
</dbReference>
<dbReference type="GO" id="GO:0003785">
    <property type="term" value="F:actin monomer binding"/>
    <property type="evidence" value="ECO:0007669"/>
    <property type="project" value="TreeGrafter"/>
</dbReference>
<dbReference type="CDD" id="cd00148">
    <property type="entry name" value="PROF"/>
    <property type="match status" value="1"/>
</dbReference>
<dbReference type="FunFam" id="3.30.450.30:FF:000001">
    <property type="entry name" value="Profilin"/>
    <property type="match status" value="1"/>
</dbReference>
<dbReference type="Gene3D" id="3.30.450.30">
    <property type="entry name" value="Dynein light chain 2a, cytoplasmic"/>
    <property type="match status" value="1"/>
</dbReference>
<dbReference type="InterPro" id="IPR048278">
    <property type="entry name" value="PFN"/>
</dbReference>
<dbReference type="InterPro" id="IPR005455">
    <property type="entry name" value="PFN_euk"/>
</dbReference>
<dbReference type="InterPro" id="IPR036140">
    <property type="entry name" value="PFN_sf"/>
</dbReference>
<dbReference type="InterPro" id="IPR027310">
    <property type="entry name" value="Profilin_CS"/>
</dbReference>
<dbReference type="PANTHER" id="PTHR11604">
    <property type="entry name" value="PROFILIN"/>
    <property type="match status" value="1"/>
</dbReference>
<dbReference type="PANTHER" id="PTHR11604:SF67">
    <property type="entry name" value="PROFILIN LP04"/>
    <property type="match status" value="1"/>
</dbReference>
<dbReference type="Pfam" id="PF00235">
    <property type="entry name" value="Profilin"/>
    <property type="match status" value="1"/>
</dbReference>
<dbReference type="PRINTS" id="PR00392">
    <property type="entry name" value="PROFILIN"/>
</dbReference>
<dbReference type="PRINTS" id="PR01640">
    <property type="entry name" value="PROFILINPLNT"/>
</dbReference>
<dbReference type="SMART" id="SM00392">
    <property type="entry name" value="PROF"/>
    <property type="match status" value="1"/>
</dbReference>
<dbReference type="SUPFAM" id="SSF55770">
    <property type="entry name" value="Profilin (actin-binding protein)"/>
    <property type="match status" value="1"/>
</dbReference>
<dbReference type="PROSITE" id="PS00414">
    <property type="entry name" value="PROFILIN"/>
    <property type="match status" value="1"/>
</dbReference>
<keyword id="KW-0009">Actin-binding</keyword>
<keyword id="KW-0963">Cytoplasm</keyword>
<keyword id="KW-0206">Cytoskeleton</keyword>